<evidence type="ECO:0000255" key="1">
    <source>
        <dbReference type="HAMAP-Rule" id="MF_00558"/>
    </source>
</evidence>
<sequence length="397" mass="42268">MNIHEYQAKALLRSYGAPVSDGRVVLKADEAKSAAGELGGPLWVVKAQIHAGGRGKGKFKEPEAGEKGGVRLAKSVGEAAELAKQMLGRTLVTHQTGPSGKQVNRIYIEEGSDIARELYLALLVDRGTSRISFVVSTEGGMDIEEVAASTPEKIVSFSVDPASGLSDFHGRRVAFALGLEGAQVKQCVQLVKNLYRAFVEKDMEMLEINPLIVMTDGNLKVLDAKVGFDNNALYRQPDIMALRDETEEDPKELAASKFDLNYIALDGEIGCMVNGAGLAMATMDIIKLYGAEPANFLDVGGGATKEKVTEAFKIITSDPNVKGILVNIFGGIMRCDIIAEGIIAAVKEVGLQVPLVVRLEGTNVEKGKEIIANSGLNVIAGDNLSDAAQKIVKAVKG</sequence>
<protein>
    <recommendedName>
        <fullName evidence="1">Succinate--CoA ligase [ADP-forming] subunit beta</fullName>
        <ecNumber evidence="1">6.2.1.5</ecNumber>
    </recommendedName>
    <alternativeName>
        <fullName evidence="1">Succinyl-CoA synthetase subunit beta</fullName>
        <shortName evidence="1">SCS-beta</shortName>
    </alternativeName>
</protein>
<gene>
    <name evidence="1" type="primary">sucC</name>
    <name type="ordered locus">Rsph17025_0079</name>
</gene>
<organism>
    <name type="scientific">Cereibacter sphaeroides (strain ATCC 17025 / ATH 2.4.3)</name>
    <name type="common">Rhodobacter sphaeroides</name>
    <dbReference type="NCBI Taxonomy" id="349102"/>
    <lineage>
        <taxon>Bacteria</taxon>
        <taxon>Pseudomonadati</taxon>
        <taxon>Pseudomonadota</taxon>
        <taxon>Alphaproteobacteria</taxon>
        <taxon>Rhodobacterales</taxon>
        <taxon>Paracoccaceae</taxon>
        <taxon>Cereibacter</taxon>
    </lineage>
</organism>
<accession>A4WNM6</accession>
<comment type="function">
    <text evidence="1">Succinyl-CoA synthetase functions in the citric acid cycle (TCA), coupling the hydrolysis of succinyl-CoA to the synthesis of either ATP or GTP and thus represents the only step of substrate-level phosphorylation in the TCA. The beta subunit provides nucleotide specificity of the enzyme and binds the substrate succinate, while the binding sites for coenzyme A and phosphate are found in the alpha subunit.</text>
</comment>
<comment type="catalytic activity">
    <reaction evidence="1">
        <text>succinate + ATP + CoA = succinyl-CoA + ADP + phosphate</text>
        <dbReference type="Rhea" id="RHEA:17661"/>
        <dbReference type="ChEBI" id="CHEBI:30031"/>
        <dbReference type="ChEBI" id="CHEBI:30616"/>
        <dbReference type="ChEBI" id="CHEBI:43474"/>
        <dbReference type="ChEBI" id="CHEBI:57287"/>
        <dbReference type="ChEBI" id="CHEBI:57292"/>
        <dbReference type="ChEBI" id="CHEBI:456216"/>
        <dbReference type="EC" id="6.2.1.5"/>
    </reaction>
    <physiologicalReaction direction="right-to-left" evidence="1">
        <dbReference type="Rhea" id="RHEA:17663"/>
    </physiologicalReaction>
</comment>
<comment type="catalytic activity">
    <reaction evidence="1">
        <text>GTP + succinate + CoA = succinyl-CoA + GDP + phosphate</text>
        <dbReference type="Rhea" id="RHEA:22120"/>
        <dbReference type="ChEBI" id="CHEBI:30031"/>
        <dbReference type="ChEBI" id="CHEBI:37565"/>
        <dbReference type="ChEBI" id="CHEBI:43474"/>
        <dbReference type="ChEBI" id="CHEBI:57287"/>
        <dbReference type="ChEBI" id="CHEBI:57292"/>
        <dbReference type="ChEBI" id="CHEBI:58189"/>
    </reaction>
    <physiologicalReaction direction="right-to-left" evidence="1">
        <dbReference type="Rhea" id="RHEA:22122"/>
    </physiologicalReaction>
</comment>
<comment type="cofactor">
    <cofactor evidence="1">
        <name>Mg(2+)</name>
        <dbReference type="ChEBI" id="CHEBI:18420"/>
    </cofactor>
    <text evidence="1">Binds 1 Mg(2+) ion per subunit.</text>
</comment>
<comment type="pathway">
    <text evidence="1">Carbohydrate metabolism; tricarboxylic acid cycle; succinate from succinyl-CoA (ligase route): step 1/1.</text>
</comment>
<comment type="subunit">
    <text evidence="1">Heterotetramer of two alpha and two beta subunits.</text>
</comment>
<comment type="similarity">
    <text evidence="1">Belongs to the succinate/malate CoA ligase beta subunit family.</text>
</comment>
<proteinExistence type="inferred from homology"/>
<keyword id="KW-0067">ATP-binding</keyword>
<keyword id="KW-0436">Ligase</keyword>
<keyword id="KW-0460">Magnesium</keyword>
<keyword id="KW-0479">Metal-binding</keyword>
<keyword id="KW-0547">Nucleotide-binding</keyword>
<keyword id="KW-0816">Tricarboxylic acid cycle</keyword>
<reference key="1">
    <citation type="submission" date="2007-04" db="EMBL/GenBank/DDBJ databases">
        <title>Complete sequence of chromosome of Rhodobacter sphaeroides ATCC 17025.</title>
        <authorList>
            <consortium name="US DOE Joint Genome Institute"/>
            <person name="Copeland A."/>
            <person name="Lucas S."/>
            <person name="Lapidus A."/>
            <person name="Barry K."/>
            <person name="Detter J.C."/>
            <person name="Glavina del Rio T."/>
            <person name="Hammon N."/>
            <person name="Israni S."/>
            <person name="Dalin E."/>
            <person name="Tice H."/>
            <person name="Pitluck S."/>
            <person name="Chertkov O."/>
            <person name="Brettin T."/>
            <person name="Bruce D."/>
            <person name="Han C."/>
            <person name="Schmutz J."/>
            <person name="Larimer F."/>
            <person name="Land M."/>
            <person name="Hauser L."/>
            <person name="Kyrpides N."/>
            <person name="Kim E."/>
            <person name="Richardson P."/>
            <person name="Mackenzie C."/>
            <person name="Choudhary M."/>
            <person name="Donohue T.J."/>
            <person name="Kaplan S."/>
        </authorList>
    </citation>
    <scope>NUCLEOTIDE SEQUENCE [LARGE SCALE GENOMIC DNA]</scope>
    <source>
        <strain>ATCC 17025 / ATH 2.4.3</strain>
    </source>
</reference>
<feature type="chain" id="PRO_1000082197" description="Succinate--CoA ligase [ADP-forming] subunit beta">
    <location>
        <begin position="1"/>
        <end position="397"/>
    </location>
</feature>
<feature type="domain" description="ATP-grasp" evidence="1">
    <location>
        <begin position="9"/>
        <end position="254"/>
    </location>
</feature>
<feature type="binding site" evidence="1">
    <location>
        <position position="46"/>
    </location>
    <ligand>
        <name>ATP</name>
        <dbReference type="ChEBI" id="CHEBI:30616"/>
    </ligand>
</feature>
<feature type="binding site" evidence="1">
    <location>
        <begin position="53"/>
        <end position="55"/>
    </location>
    <ligand>
        <name>ATP</name>
        <dbReference type="ChEBI" id="CHEBI:30616"/>
    </ligand>
</feature>
<feature type="binding site" evidence="1">
    <location>
        <position position="109"/>
    </location>
    <ligand>
        <name>ATP</name>
        <dbReference type="ChEBI" id="CHEBI:30616"/>
    </ligand>
</feature>
<feature type="binding site" evidence="1">
    <location>
        <position position="112"/>
    </location>
    <ligand>
        <name>ATP</name>
        <dbReference type="ChEBI" id="CHEBI:30616"/>
    </ligand>
</feature>
<feature type="binding site" evidence="1">
    <location>
        <position position="117"/>
    </location>
    <ligand>
        <name>ATP</name>
        <dbReference type="ChEBI" id="CHEBI:30616"/>
    </ligand>
</feature>
<feature type="binding site" evidence="1">
    <location>
        <position position="209"/>
    </location>
    <ligand>
        <name>Mg(2+)</name>
        <dbReference type="ChEBI" id="CHEBI:18420"/>
    </ligand>
</feature>
<feature type="binding site" evidence="1">
    <location>
        <position position="223"/>
    </location>
    <ligand>
        <name>Mg(2+)</name>
        <dbReference type="ChEBI" id="CHEBI:18420"/>
    </ligand>
</feature>
<feature type="binding site" evidence="1">
    <location>
        <position position="274"/>
    </location>
    <ligand>
        <name>substrate</name>
        <note>ligand shared with subunit alpha</note>
    </ligand>
</feature>
<feature type="binding site" evidence="1">
    <location>
        <begin position="331"/>
        <end position="333"/>
    </location>
    <ligand>
        <name>substrate</name>
        <note>ligand shared with subunit alpha</note>
    </ligand>
</feature>
<name>SUCC_CERS5</name>
<dbReference type="EC" id="6.2.1.5" evidence="1"/>
<dbReference type="EMBL" id="CP000661">
    <property type="protein sequence ID" value="ABP68990.1"/>
    <property type="molecule type" value="Genomic_DNA"/>
</dbReference>
<dbReference type="SMR" id="A4WNM6"/>
<dbReference type="STRING" id="349102.Rsph17025_0079"/>
<dbReference type="KEGG" id="rsq:Rsph17025_0079"/>
<dbReference type="eggNOG" id="COG0045">
    <property type="taxonomic scope" value="Bacteria"/>
</dbReference>
<dbReference type="HOGENOM" id="CLU_037430_0_2_5"/>
<dbReference type="BioCyc" id="RSPH349102:G1G8M-78-MONOMER"/>
<dbReference type="UniPathway" id="UPA00223">
    <property type="reaction ID" value="UER00999"/>
</dbReference>
<dbReference type="GO" id="GO:0005829">
    <property type="term" value="C:cytosol"/>
    <property type="evidence" value="ECO:0007669"/>
    <property type="project" value="TreeGrafter"/>
</dbReference>
<dbReference type="GO" id="GO:0042709">
    <property type="term" value="C:succinate-CoA ligase complex"/>
    <property type="evidence" value="ECO:0007669"/>
    <property type="project" value="TreeGrafter"/>
</dbReference>
<dbReference type="GO" id="GO:0005524">
    <property type="term" value="F:ATP binding"/>
    <property type="evidence" value="ECO:0007669"/>
    <property type="project" value="UniProtKB-UniRule"/>
</dbReference>
<dbReference type="GO" id="GO:0000287">
    <property type="term" value="F:magnesium ion binding"/>
    <property type="evidence" value="ECO:0007669"/>
    <property type="project" value="UniProtKB-UniRule"/>
</dbReference>
<dbReference type="GO" id="GO:0004775">
    <property type="term" value="F:succinate-CoA ligase (ADP-forming) activity"/>
    <property type="evidence" value="ECO:0007669"/>
    <property type="project" value="UniProtKB-UniRule"/>
</dbReference>
<dbReference type="GO" id="GO:0004776">
    <property type="term" value="F:succinate-CoA ligase (GDP-forming) activity"/>
    <property type="evidence" value="ECO:0007669"/>
    <property type="project" value="RHEA"/>
</dbReference>
<dbReference type="GO" id="GO:0006104">
    <property type="term" value="P:succinyl-CoA metabolic process"/>
    <property type="evidence" value="ECO:0007669"/>
    <property type="project" value="TreeGrafter"/>
</dbReference>
<dbReference type="GO" id="GO:0006099">
    <property type="term" value="P:tricarboxylic acid cycle"/>
    <property type="evidence" value="ECO:0007669"/>
    <property type="project" value="UniProtKB-UniRule"/>
</dbReference>
<dbReference type="FunFam" id="3.30.1490.20:FF:000002">
    <property type="entry name" value="Succinate--CoA ligase [ADP-forming] subunit beta"/>
    <property type="match status" value="1"/>
</dbReference>
<dbReference type="FunFam" id="3.30.470.20:FF:000002">
    <property type="entry name" value="Succinate--CoA ligase [ADP-forming] subunit beta"/>
    <property type="match status" value="1"/>
</dbReference>
<dbReference type="FunFam" id="3.40.50.261:FF:000001">
    <property type="entry name" value="Succinate--CoA ligase [ADP-forming] subunit beta"/>
    <property type="match status" value="1"/>
</dbReference>
<dbReference type="Gene3D" id="3.30.1490.20">
    <property type="entry name" value="ATP-grasp fold, A domain"/>
    <property type="match status" value="1"/>
</dbReference>
<dbReference type="Gene3D" id="3.30.470.20">
    <property type="entry name" value="ATP-grasp fold, B domain"/>
    <property type="match status" value="1"/>
</dbReference>
<dbReference type="Gene3D" id="3.40.50.261">
    <property type="entry name" value="Succinyl-CoA synthetase domains"/>
    <property type="match status" value="1"/>
</dbReference>
<dbReference type="HAMAP" id="MF_00558">
    <property type="entry name" value="Succ_CoA_beta"/>
    <property type="match status" value="1"/>
</dbReference>
<dbReference type="InterPro" id="IPR011761">
    <property type="entry name" value="ATP-grasp"/>
</dbReference>
<dbReference type="InterPro" id="IPR013650">
    <property type="entry name" value="ATP-grasp_succ-CoA_synth-type"/>
</dbReference>
<dbReference type="InterPro" id="IPR013815">
    <property type="entry name" value="ATP_grasp_subdomain_1"/>
</dbReference>
<dbReference type="InterPro" id="IPR017866">
    <property type="entry name" value="Succ-CoA_synthase_bsu_CS"/>
</dbReference>
<dbReference type="InterPro" id="IPR005811">
    <property type="entry name" value="SUCC_ACL_C"/>
</dbReference>
<dbReference type="InterPro" id="IPR005809">
    <property type="entry name" value="Succ_CoA_ligase-like_bsu"/>
</dbReference>
<dbReference type="InterPro" id="IPR016102">
    <property type="entry name" value="Succinyl-CoA_synth-like"/>
</dbReference>
<dbReference type="NCBIfam" id="NF001913">
    <property type="entry name" value="PRK00696.1"/>
    <property type="match status" value="1"/>
</dbReference>
<dbReference type="NCBIfam" id="TIGR01016">
    <property type="entry name" value="sucCoAbeta"/>
    <property type="match status" value="1"/>
</dbReference>
<dbReference type="PANTHER" id="PTHR11815:SF10">
    <property type="entry name" value="SUCCINATE--COA LIGASE [GDP-FORMING] SUBUNIT BETA, MITOCHONDRIAL"/>
    <property type="match status" value="1"/>
</dbReference>
<dbReference type="PANTHER" id="PTHR11815">
    <property type="entry name" value="SUCCINYL-COA SYNTHETASE BETA CHAIN"/>
    <property type="match status" value="1"/>
</dbReference>
<dbReference type="Pfam" id="PF08442">
    <property type="entry name" value="ATP-grasp_2"/>
    <property type="match status" value="1"/>
</dbReference>
<dbReference type="Pfam" id="PF00549">
    <property type="entry name" value="Ligase_CoA"/>
    <property type="match status" value="1"/>
</dbReference>
<dbReference type="PIRSF" id="PIRSF001554">
    <property type="entry name" value="SucCS_beta"/>
    <property type="match status" value="1"/>
</dbReference>
<dbReference type="SUPFAM" id="SSF56059">
    <property type="entry name" value="Glutathione synthetase ATP-binding domain-like"/>
    <property type="match status" value="1"/>
</dbReference>
<dbReference type="SUPFAM" id="SSF52210">
    <property type="entry name" value="Succinyl-CoA synthetase domains"/>
    <property type="match status" value="1"/>
</dbReference>
<dbReference type="PROSITE" id="PS50975">
    <property type="entry name" value="ATP_GRASP"/>
    <property type="match status" value="1"/>
</dbReference>
<dbReference type="PROSITE" id="PS01217">
    <property type="entry name" value="SUCCINYL_COA_LIG_3"/>
    <property type="match status" value="1"/>
</dbReference>